<dbReference type="EMBL" id="L13257">
    <property type="protein sequence ID" value="AAC37608.1"/>
    <property type="molecule type" value="mRNA"/>
</dbReference>
<dbReference type="EMBL" id="BC078876">
    <property type="protein sequence ID" value="AAH78876.1"/>
    <property type="molecule type" value="mRNA"/>
</dbReference>
<dbReference type="PIR" id="A48189">
    <property type="entry name" value="A48189"/>
</dbReference>
<dbReference type="RefSeq" id="NP_037162.1">
    <property type="nucleotide sequence ID" value="NM_013030.2"/>
</dbReference>
<dbReference type="FunCoup" id="Q06496">
    <property type="interactions" value="17"/>
</dbReference>
<dbReference type="STRING" id="10116.ENSRNOP00000031764"/>
<dbReference type="BindingDB" id="Q06496"/>
<dbReference type="ChEMBL" id="CHEMBL4296024"/>
<dbReference type="TCDB" id="2.A.58.1.1">
    <property type="family name" value="the phosphate:na(+) symporter (pnas) family"/>
</dbReference>
<dbReference type="GlyCosmos" id="Q06496">
    <property type="glycosylation" value="2 sites, No reported glycans"/>
</dbReference>
<dbReference type="GlyGen" id="Q06496">
    <property type="glycosylation" value="4 sites"/>
</dbReference>
<dbReference type="iPTMnet" id="Q06496"/>
<dbReference type="PhosphoSitePlus" id="Q06496"/>
<dbReference type="PaxDb" id="10116-ENSRNOP00000031764"/>
<dbReference type="Ensembl" id="ENSRNOT00000033749.6">
    <property type="protein sequence ID" value="ENSRNOP00000031764.4"/>
    <property type="gene ID" value="ENSRNOG00000015262.8"/>
</dbReference>
<dbReference type="GeneID" id="25548"/>
<dbReference type="KEGG" id="rno:25548"/>
<dbReference type="UCSC" id="RGD:3708">
    <property type="organism name" value="rat"/>
</dbReference>
<dbReference type="AGR" id="RGD:3708"/>
<dbReference type="CTD" id="6569"/>
<dbReference type="RGD" id="3708">
    <property type="gene designation" value="Slc34a1"/>
</dbReference>
<dbReference type="eggNOG" id="ENOG502QQ3I">
    <property type="taxonomic scope" value="Eukaryota"/>
</dbReference>
<dbReference type="GeneTree" id="ENSGT00950000183177"/>
<dbReference type="HOGENOM" id="CLU_025063_0_0_1"/>
<dbReference type="InParanoid" id="Q06496"/>
<dbReference type="OMA" id="HDAIPVM"/>
<dbReference type="OrthoDB" id="73475at9989"/>
<dbReference type="PhylomeDB" id="Q06496"/>
<dbReference type="TreeFam" id="TF313981"/>
<dbReference type="Reactome" id="R-RNO-427589">
    <property type="pathway name" value="Type II Na+/Pi cotransporters"/>
</dbReference>
<dbReference type="Reactome" id="R-RNO-5683826">
    <property type="pathway name" value="Surfactant metabolism"/>
</dbReference>
<dbReference type="PRO" id="PR:Q06496"/>
<dbReference type="Proteomes" id="UP000002494">
    <property type="component" value="Chromosome 17"/>
</dbReference>
<dbReference type="Bgee" id="ENSRNOG00000015262">
    <property type="expression patterns" value="Expressed in adult mammalian kidney and 12 other cell types or tissues"/>
</dbReference>
<dbReference type="GO" id="GO:0016324">
    <property type="term" value="C:apical plasma membrane"/>
    <property type="evidence" value="ECO:0000314"/>
    <property type="project" value="RGD"/>
</dbReference>
<dbReference type="GO" id="GO:0016323">
    <property type="term" value="C:basolateral plasma membrane"/>
    <property type="evidence" value="ECO:0000266"/>
    <property type="project" value="RGD"/>
</dbReference>
<dbReference type="GO" id="GO:0005903">
    <property type="term" value="C:brush border"/>
    <property type="evidence" value="ECO:0000318"/>
    <property type="project" value="GO_Central"/>
</dbReference>
<dbReference type="GO" id="GO:0031526">
    <property type="term" value="C:brush border membrane"/>
    <property type="evidence" value="ECO:0000314"/>
    <property type="project" value="UniProtKB"/>
</dbReference>
<dbReference type="GO" id="GO:0009986">
    <property type="term" value="C:cell surface"/>
    <property type="evidence" value="ECO:0000314"/>
    <property type="project" value="RGD"/>
</dbReference>
<dbReference type="GO" id="GO:0005829">
    <property type="term" value="C:cytosol"/>
    <property type="evidence" value="ECO:0007669"/>
    <property type="project" value="Ensembl"/>
</dbReference>
<dbReference type="GO" id="GO:0005768">
    <property type="term" value="C:endosome"/>
    <property type="evidence" value="ECO:0000314"/>
    <property type="project" value="RGD"/>
</dbReference>
<dbReference type="GO" id="GO:0072686">
    <property type="term" value="C:mitotic spindle"/>
    <property type="evidence" value="ECO:0007669"/>
    <property type="project" value="Ensembl"/>
</dbReference>
<dbReference type="GO" id="GO:0016607">
    <property type="term" value="C:nuclear speck"/>
    <property type="evidence" value="ECO:0007669"/>
    <property type="project" value="Ensembl"/>
</dbReference>
<dbReference type="GO" id="GO:0048471">
    <property type="term" value="C:perinuclear region of cytoplasm"/>
    <property type="evidence" value="ECO:0000314"/>
    <property type="project" value="RGD"/>
</dbReference>
<dbReference type="GO" id="GO:0005886">
    <property type="term" value="C:plasma membrane"/>
    <property type="evidence" value="ECO:0000314"/>
    <property type="project" value="UniProtKB"/>
</dbReference>
<dbReference type="GO" id="GO:0031982">
    <property type="term" value="C:vesicle"/>
    <property type="evidence" value="ECO:0000266"/>
    <property type="project" value="RGD"/>
</dbReference>
<dbReference type="GO" id="GO:0042802">
    <property type="term" value="F:identical protein binding"/>
    <property type="evidence" value="ECO:0000353"/>
    <property type="project" value="RGD"/>
</dbReference>
<dbReference type="GO" id="GO:0030165">
    <property type="term" value="F:PDZ domain binding"/>
    <property type="evidence" value="ECO:0000353"/>
    <property type="project" value="RGD"/>
</dbReference>
<dbReference type="GO" id="GO:0044877">
    <property type="term" value="F:protein-containing complex binding"/>
    <property type="evidence" value="ECO:0000353"/>
    <property type="project" value="RGD"/>
</dbReference>
<dbReference type="GO" id="GO:0005436">
    <property type="term" value="F:sodium:phosphate symporter activity"/>
    <property type="evidence" value="ECO:0000314"/>
    <property type="project" value="UniProtKB"/>
</dbReference>
<dbReference type="GO" id="GO:1901684">
    <property type="term" value="P:arsenate ion transmembrane transport"/>
    <property type="evidence" value="ECO:0000314"/>
    <property type="project" value="RGD"/>
</dbReference>
<dbReference type="GO" id="GO:0046849">
    <property type="term" value="P:bone remodeling"/>
    <property type="evidence" value="ECO:0000266"/>
    <property type="project" value="RGD"/>
</dbReference>
<dbReference type="GO" id="GO:0055074">
    <property type="term" value="P:calcium ion homeostasis"/>
    <property type="evidence" value="ECO:0000266"/>
    <property type="project" value="RGD"/>
</dbReference>
<dbReference type="GO" id="GO:0071248">
    <property type="term" value="P:cellular response to metal ion"/>
    <property type="evidence" value="ECO:0000270"/>
    <property type="project" value="RGD"/>
</dbReference>
<dbReference type="GO" id="GO:0071374">
    <property type="term" value="P:cellular response to parathyroid hormone stimulus"/>
    <property type="evidence" value="ECO:0000270"/>
    <property type="project" value="RGD"/>
</dbReference>
<dbReference type="GO" id="GO:0016036">
    <property type="term" value="P:cellular response to phosphate starvation"/>
    <property type="evidence" value="ECO:0000314"/>
    <property type="project" value="UniProtKB"/>
</dbReference>
<dbReference type="GO" id="GO:0072734">
    <property type="term" value="P:cellular response to staurosporine"/>
    <property type="evidence" value="ECO:0000270"/>
    <property type="project" value="RGD"/>
</dbReference>
<dbReference type="GO" id="GO:0097187">
    <property type="term" value="P:dentinogenesis"/>
    <property type="evidence" value="ECO:0000270"/>
    <property type="project" value="RGD"/>
</dbReference>
<dbReference type="GO" id="GO:0010467">
    <property type="term" value="P:gene expression"/>
    <property type="evidence" value="ECO:0000266"/>
    <property type="project" value="RGD"/>
</dbReference>
<dbReference type="GO" id="GO:1901128">
    <property type="term" value="P:gentamycin metabolic process"/>
    <property type="evidence" value="ECO:0000270"/>
    <property type="project" value="RGD"/>
</dbReference>
<dbReference type="GO" id="GO:0009100">
    <property type="term" value="P:glycoprotein metabolic process"/>
    <property type="evidence" value="ECO:0000270"/>
    <property type="project" value="RGD"/>
</dbReference>
<dbReference type="GO" id="GO:0042431">
    <property type="term" value="P:indole metabolic process"/>
    <property type="evidence" value="ECO:0000270"/>
    <property type="project" value="RGD"/>
</dbReference>
<dbReference type="GO" id="GO:0030505">
    <property type="term" value="P:inorganic diphosphate transport"/>
    <property type="evidence" value="ECO:0000266"/>
    <property type="project" value="RGD"/>
</dbReference>
<dbReference type="GO" id="GO:0030643">
    <property type="term" value="P:intracellular phosphate ion homeostasis"/>
    <property type="evidence" value="ECO:0000318"/>
    <property type="project" value="GO_Central"/>
</dbReference>
<dbReference type="GO" id="GO:0001822">
    <property type="term" value="P:kidney development"/>
    <property type="evidence" value="ECO:0000270"/>
    <property type="project" value="RGD"/>
</dbReference>
<dbReference type="GO" id="GO:0001503">
    <property type="term" value="P:ossification"/>
    <property type="evidence" value="ECO:0000270"/>
    <property type="project" value="RGD"/>
</dbReference>
<dbReference type="GO" id="GO:0055062">
    <property type="term" value="P:phosphate ion homeostasis"/>
    <property type="evidence" value="ECO:0000266"/>
    <property type="project" value="RGD"/>
</dbReference>
<dbReference type="GO" id="GO:0035435">
    <property type="term" value="P:phosphate ion transmembrane transport"/>
    <property type="evidence" value="ECO:0000315"/>
    <property type="project" value="RGD"/>
</dbReference>
<dbReference type="GO" id="GO:0006817">
    <property type="term" value="P:phosphate ion transport"/>
    <property type="evidence" value="ECO:0000266"/>
    <property type="project" value="RGD"/>
</dbReference>
<dbReference type="GO" id="GO:0045838">
    <property type="term" value="P:positive regulation of membrane potential"/>
    <property type="evidence" value="ECO:0000314"/>
    <property type="project" value="RGD"/>
</dbReference>
<dbReference type="GO" id="GO:2000187">
    <property type="term" value="P:positive regulation of phosphate transmembrane transport"/>
    <property type="evidence" value="ECO:0000314"/>
    <property type="project" value="RGD"/>
</dbReference>
<dbReference type="GO" id="GO:2000120">
    <property type="term" value="P:positive regulation of sodium-dependent phosphate transport"/>
    <property type="evidence" value="ECO:0000314"/>
    <property type="project" value="RGD"/>
</dbReference>
<dbReference type="GO" id="GO:0046686">
    <property type="term" value="P:response to cadmium ion"/>
    <property type="evidence" value="ECO:0000266"/>
    <property type="project" value="RGD"/>
</dbReference>
<dbReference type="GO" id="GO:0032355">
    <property type="term" value="P:response to estradiol"/>
    <property type="evidence" value="ECO:0000270"/>
    <property type="project" value="RGD"/>
</dbReference>
<dbReference type="GO" id="GO:0060416">
    <property type="term" value="P:response to growth hormone"/>
    <property type="evidence" value="ECO:0000270"/>
    <property type="project" value="RGD"/>
</dbReference>
<dbReference type="GO" id="GO:0010288">
    <property type="term" value="P:response to lead ion"/>
    <property type="evidence" value="ECO:0000266"/>
    <property type="project" value="RGD"/>
</dbReference>
<dbReference type="GO" id="GO:0032026">
    <property type="term" value="P:response to magnesium ion"/>
    <property type="evidence" value="ECO:0000270"/>
    <property type="project" value="RGD"/>
</dbReference>
<dbReference type="GO" id="GO:0046689">
    <property type="term" value="P:response to mercury ion"/>
    <property type="evidence" value="ECO:0000266"/>
    <property type="project" value="RGD"/>
</dbReference>
<dbReference type="GO" id="GO:0007584">
    <property type="term" value="P:response to nutrient"/>
    <property type="evidence" value="ECO:0000270"/>
    <property type="project" value="RGD"/>
</dbReference>
<dbReference type="GO" id="GO:0071107">
    <property type="term" value="P:response to parathyroid hormone"/>
    <property type="evidence" value="ECO:0000270"/>
    <property type="project" value="RGD"/>
</dbReference>
<dbReference type="GO" id="GO:1901652">
    <property type="term" value="P:response to peptide"/>
    <property type="evidence" value="ECO:0000270"/>
    <property type="project" value="RGD"/>
</dbReference>
<dbReference type="GO" id="GO:0043434">
    <property type="term" value="P:response to peptide hormone"/>
    <property type="evidence" value="ECO:0000270"/>
    <property type="project" value="RGD"/>
</dbReference>
<dbReference type="GO" id="GO:0035864">
    <property type="term" value="P:response to potassium ion"/>
    <property type="evidence" value="ECO:0000270"/>
    <property type="project" value="RGD"/>
</dbReference>
<dbReference type="GO" id="GO:1904383">
    <property type="term" value="P:response to sodium phosphate"/>
    <property type="evidence" value="ECO:0000266"/>
    <property type="project" value="RGD"/>
</dbReference>
<dbReference type="GO" id="GO:0097066">
    <property type="term" value="P:response to thyroid hormone"/>
    <property type="evidence" value="ECO:0000270"/>
    <property type="project" value="RGD"/>
</dbReference>
<dbReference type="GO" id="GO:0033189">
    <property type="term" value="P:response to vitamin A"/>
    <property type="evidence" value="ECO:0000270"/>
    <property type="project" value="RGD"/>
</dbReference>
<dbReference type="GO" id="GO:0009410">
    <property type="term" value="P:response to xenobiotic stimulus"/>
    <property type="evidence" value="ECO:0000270"/>
    <property type="project" value="RGD"/>
</dbReference>
<dbReference type="GO" id="GO:0098719">
    <property type="term" value="P:sodium ion import across plasma membrane"/>
    <property type="evidence" value="ECO:0000314"/>
    <property type="project" value="RGD"/>
</dbReference>
<dbReference type="GO" id="GO:0044341">
    <property type="term" value="P:sodium-dependent phosphate transport"/>
    <property type="evidence" value="ECO:0000270"/>
    <property type="project" value="RGD"/>
</dbReference>
<dbReference type="GO" id="GO:0072350">
    <property type="term" value="P:tricarboxylic acid metabolic process"/>
    <property type="evidence" value="ECO:0000270"/>
    <property type="project" value="RGD"/>
</dbReference>
<dbReference type="InterPro" id="IPR003841">
    <property type="entry name" value="Na/Pi_transpt"/>
</dbReference>
<dbReference type="NCBIfam" id="TIGR01013">
    <property type="entry name" value="2a58"/>
    <property type="match status" value="1"/>
</dbReference>
<dbReference type="NCBIfam" id="NF037997">
    <property type="entry name" value="Na_Pi_symport"/>
    <property type="match status" value="2"/>
</dbReference>
<dbReference type="PANTHER" id="PTHR10010:SF21">
    <property type="entry name" value="SODIUM-DEPENDENT PHOSPHATE TRANSPORT PROTEIN 2A"/>
    <property type="match status" value="1"/>
</dbReference>
<dbReference type="PANTHER" id="PTHR10010">
    <property type="entry name" value="SOLUTE CARRIER FAMILY 34 SODIUM PHOSPHATE , MEMBER 2-RELATED"/>
    <property type="match status" value="1"/>
</dbReference>
<dbReference type="Pfam" id="PF02690">
    <property type="entry name" value="Na_Pi_cotrans"/>
    <property type="match status" value="2"/>
</dbReference>
<organism>
    <name type="scientific">Rattus norvegicus</name>
    <name type="common">Rat</name>
    <dbReference type="NCBI Taxonomy" id="10116"/>
    <lineage>
        <taxon>Eukaryota</taxon>
        <taxon>Metazoa</taxon>
        <taxon>Chordata</taxon>
        <taxon>Craniata</taxon>
        <taxon>Vertebrata</taxon>
        <taxon>Euteleostomi</taxon>
        <taxon>Mammalia</taxon>
        <taxon>Eutheria</taxon>
        <taxon>Euarchontoglires</taxon>
        <taxon>Glires</taxon>
        <taxon>Rodentia</taxon>
        <taxon>Myomorpha</taxon>
        <taxon>Muroidea</taxon>
        <taxon>Muridae</taxon>
        <taxon>Murinae</taxon>
        <taxon>Rattus</taxon>
    </lineage>
</organism>
<accession>Q06496</accession>
<name>NPT2A_RAT</name>
<proteinExistence type="evidence at protein level"/>
<protein>
    <recommendedName>
        <fullName>Sodium-dependent phosphate transport protein 2A</fullName>
        <shortName>Sodium-phosphate transport protein 2A</shortName>
    </recommendedName>
    <alternativeName>
        <fullName>Na(+)-dependent phosphate cotransporter 2A</fullName>
    </alternativeName>
    <alternativeName>
        <fullName>Sodium/phosphate cotransporter 2A</fullName>
        <shortName>Na(+)/Pi cotransporter 2A</shortName>
        <shortName>NaPi-2a</shortName>
    </alternativeName>
    <alternativeName>
        <fullName evidence="13">Solute carrier family 34 member 1</fullName>
    </alternativeName>
</protein>
<feature type="chain" id="PRO_0000068610" description="Sodium-dependent phosphate transport protein 2A">
    <location>
        <begin position="1"/>
        <end position="637"/>
    </location>
</feature>
<feature type="topological domain" description="Cytoplasmic" evidence="11">
    <location>
        <begin position="1"/>
        <end position="103"/>
    </location>
</feature>
<feature type="transmembrane region" description="Helical; Name=M1" evidence="3">
    <location>
        <begin position="104"/>
        <end position="125"/>
    </location>
</feature>
<feature type="topological domain" description="Extracellular" evidence="11">
    <location>
        <begin position="126"/>
        <end position="145"/>
    </location>
</feature>
<feature type="transmembrane region" description="Helical; Name=M2" evidence="3">
    <location>
        <begin position="146"/>
        <end position="163"/>
    </location>
</feature>
<feature type="topological domain" description="Cytoplasmic" evidence="11">
    <location>
        <begin position="164"/>
        <end position="216"/>
    </location>
</feature>
<feature type="transmembrane region" description="Helical; Name=M3" evidence="3">
    <location>
        <begin position="217"/>
        <end position="236"/>
    </location>
</feature>
<feature type="topological domain" description="Extracellular" evidence="11">
    <location>
        <begin position="237"/>
        <end position="345"/>
    </location>
</feature>
<feature type="transmembrane region" description="Helical; Name=M4" evidence="3">
    <location>
        <begin position="346"/>
        <end position="368"/>
    </location>
</feature>
<feature type="topological domain" description="Cytoplasmic" evidence="11">
    <location>
        <begin position="369"/>
        <end position="410"/>
    </location>
</feature>
<feature type="transmembrane region" description="Helical; Name=M5" evidence="3">
    <location>
        <begin position="411"/>
        <end position="434"/>
    </location>
</feature>
<feature type="topological domain" description="Extracellular" evidence="11">
    <location>
        <begin position="435"/>
        <end position="464"/>
    </location>
</feature>
<feature type="transmembrane region" description="Helical; Name=M6" evidence="3">
    <location>
        <begin position="465"/>
        <end position="485"/>
    </location>
</feature>
<feature type="topological domain" description="Cytoplasmic" evidence="11">
    <location>
        <begin position="486"/>
        <end position="511"/>
    </location>
</feature>
<feature type="transmembrane region" description="Helical; Name=M7" evidence="3">
    <location>
        <begin position="512"/>
        <end position="532"/>
    </location>
</feature>
<feature type="topological domain" description="Extracellular" evidence="11">
    <location>
        <begin position="533"/>
        <end position="537"/>
    </location>
</feature>
<feature type="transmembrane region" description="Helical; Name=M8" evidence="3">
    <location>
        <begin position="538"/>
        <end position="559"/>
    </location>
</feature>
<feature type="topological domain" description="Cytoplasmic" evidence="11">
    <location>
        <begin position="560"/>
        <end position="637"/>
    </location>
</feature>
<feature type="modified residue" description="Phosphoserine" evidence="14">
    <location>
        <position position="14"/>
    </location>
</feature>
<feature type="modified residue" description="Phosphoserine" evidence="2">
    <location>
        <position position="34"/>
    </location>
</feature>
<feature type="modified residue" description="Phosphothreonine; by PKC" evidence="3">
    <location>
        <position position="506"/>
    </location>
</feature>
<feature type="modified residue" description="Phosphoserine" evidence="14">
    <location>
        <position position="605"/>
    </location>
</feature>
<feature type="modified residue" description="Phosphothreonine" evidence="14">
    <location>
        <position position="621"/>
    </location>
</feature>
<feature type="modified residue" description="Phosphoserine" evidence="14">
    <location>
        <position position="623"/>
    </location>
</feature>
<feature type="glycosylation site" description="N-linked (GlcNAc...) asparagine" evidence="3">
    <location>
        <position position="298"/>
    </location>
</feature>
<feature type="glycosylation site" description="N-linked (GlcNAc...) asparagine" evidence="3">
    <location>
        <position position="328"/>
    </location>
</feature>
<feature type="disulfide bond" evidence="6">
    <location>
        <begin position="225"/>
        <end position="520"/>
    </location>
</feature>
<feature type="disulfide bond" evidence="6">
    <location>
        <begin position="306"/>
        <end position="334"/>
    </location>
</feature>
<feature type="mutagenesis site" description="Reduced protein expression and transport activity." evidence="6">
    <original>C</original>
    <variation>S</variation>
    <location>
        <position position="62"/>
    </location>
</feature>
<feature type="mutagenesis site" description="No effect on protein expression and transport activity." evidence="6">
    <original>C</original>
    <variation>S</variation>
    <location>
        <position position="70"/>
    </location>
</feature>
<feature type="mutagenesis site" description="No effect on protein expression and transport activity." evidence="6">
    <original>C</original>
    <variation>S</variation>
    <location>
        <position position="116"/>
    </location>
</feature>
<feature type="mutagenesis site" description="No effect on protein expression but reduced transport activity. Reduced protein expression and loss of transport activity; when associated with S-306 or S-334." evidence="6">
    <original>C</original>
    <variation>S</variation>
    <location>
        <position position="225"/>
    </location>
</feature>
<feature type="mutagenesis site" description="No effect on protein expression but reduced transport activity. Reduced protein expression and loss of transport activity; when associated with S-225 or S-520. No effect on protein expression and reduced transport activity; when associated with S-334." evidence="6">
    <original>C</original>
    <variation>S</variation>
    <location>
        <position position="306"/>
    </location>
</feature>
<feature type="mutagenesis site" description="No effect on protein expression but reduced transport activity. Reduced protein expression and loss of transport activity; when associated with S-225. No effect on protein expression and reduced transport activity; when associated with S-306." evidence="6">
    <original>C</original>
    <variation>S</variation>
    <location>
        <position position="334"/>
    </location>
</feature>
<feature type="mutagenesis site" description="No effect on protein expression and transport activity." evidence="6">
    <original>C</original>
    <variation>S</variation>
    <location>
        <position position="361"/>
    </location>
</feature>
<feature type="mutagenesis site" description="No effect on protein expression but reduced transport activity." evidence="6">
    <original>C</original>
    <variation>S</variation>
    <location>
        <position position="363"/>
    </location>
</feature>
<feature type="mutagenesis site" description="Reduced protein expression and transport activity." evidence="6">
    <original>C</original>
    <variation>S</variation>
    <location>
        <position position="474"/>
    </location>
</feature>
<feature type="mutagenesis site" description="No effect on protein expression and transport activity." evidence="6">
    <original>C</original>
    <variation>S</variation>
    <location>
        <position position="491"/>
    </location>
</feature>
<feature type="mutagenesis site" description="No effect on protein expression and transport activity. Reduced protein expression and loss of transport activity; when associated with S-306." evidence="6">
    <original>C</original>
    <variation>S</variation>
    <location>
        <position position="520"/>
    </location>
</feature>
<feature type="mutagenesis site" description="Reduced protein expression and transport activity." evidence="6">
    <original>C</original>
    <variation>S</variation>
    <location>
        <position position="597"/>
    </location>
</feature>
<sequence>MMSYSERLGGPAVSPLPVRGRHMVHGAAFAYVPSPQVLHRIPGTTTYAISSLSPVALTEHSCPYGEVLECHDPLPAKLAQEEEQKPEPRLSQKLAQVGTKLLKVPLMLGFLYLFVCSLDVLSSAFQLAGGKVAGDIFKDNAILSNPVAGLVVGILVTVLVQSSSTSTSIIVSMVSSGLLEVSSAIPIIMGSNIGTSVTNTIVALMQAGDRTDFRRAFAGATVHDCFNWLSVLVLLPLEAATGYLHHVTGLVVASFNIRGGRDAPDLLKVITEPFTKLIIQLDKSVITSIAVGDESLRNHSLIRIWCQPETKEASTSMSRVEAIGSLANTTMEKCNHIFVDTGLPDLAVGLILLAGSLVVLCTCLILLVKMLNSLLKGQVANVIQKVINTDFPAPFTWVTGYFAMVVGASMTFVVQSSSVFTSAITPLIGLGVISIERAYPLTLGSNIGTTTTAILAALASPREKLSSSFQIALCHFFFNISGILLWYPLPCTRLPIRMAKALGKRTAKYRWFAVLYLLVCFLLLPSLVFGISMAGWQAMVGVGTPFGALLAFVVLVNVLQSRSPGHLPKWLQTWDFLPRWMHSLQPLDGLITRATLCYARPEPRSPQLPPRVFLEELPPATPSPRLALPAHHNATRL</sequence>
<evidence type="ECO:0000250" key="1">
    <source>
        <dbReference type="UniProtKB" id="Q06495"/>
    </source>
</evidence>
<evidence type="ECO:0000250" key="2">
    <source>
        <dbReference type="UniProtKB" id="Q60825"/>
    </source>
</evidence>
<evidence type="ECO:0000255" key="3"/>
<evidence type="ECO:0000269" key="4">
    <source>
    </source>
</evidence>
<evidence type="ECO:0000269" key="5">
    <source>
    </source>
</evidence>
<evidence type="ECO:0000269" key="6">
    <source>
    </source>
</evidence>
<evidence type="ECO:0000269" key="7">
    <source>
    </source>
</evidence>
<evidence type="ECO:0000269" key="8">
    <source>
    </source>
</evidence>
<evidence type="ECO:0000269" key="9">
    <source>
    </source>
</evidence>
<evidence type="ECO:0000305" key="10"/>
<evidence type="ECO:0000305" key="11">
    <source>
    </source>
</evidence>
<evidence type="ECO:0000305" key="12">
    <source>
    </source>
</evidence>
<evidence type="ECO:0000312" key="13">
    <source>
        <dbReference type="RGD" id="3708"/>
    </source>
</evidence>
<evidence type="ECO:0007744" key="14">
    <source>
    </source>
</evidence>
<reference key="1">
    <citation type="journal article" date="1993" name="Proc. Natl. Acad. Sci. U.S.A.">
        <title>Expression cloning of human and rat renal cortex Na/Pi cotransport.</title>
        <authorList>
            <person name="Magagnin S."/>
            <person name="Werner A."/>
            <person name="Markovich D."/>
            <person name="Sorribas V."/>
            <person name="Stange G."/>
            <person name="Biber J."/>
            <person name="Murer H."/>
        </authorList>
    </citation>
    <scope>NUCLEOTIDE SEQUENCE [MRNA]</scope>
    <scope>FUNCTION</scope>
    <scope>TRANSPORTER ACTIVITY</scope>
    <scope>BIOPHYSICOCHEMICAL PROPERTIES</scope>
    <scope>TISSUE SPECIFICITY</scope>
    <source>
        <tissue>Kidney</tissue>
    </source>
</reference>
<reference key="2">
    <citation type="journal article" date="2004" name="Genome Res.">
        <title>The status, quality, and expansion of the NIH full-length cDNA project: the Mammalian Gene Collection (MGC).</title>
        <authorList>
            <consortium name="The MGC Project Team"/>
        </authorList>
    </citation>
    <scope>NUCLEOTIDE SEQUENCE [LARGE SCALE MRNA]</scope>
    <source>
        <tissue>Kidney</tissue>
    </source>
</reference>
<reference key="3">
    <citation type="journal article" date="1996" name="Kidney Int.">
        <title>Regulation of rat renal Na/Pi-cotransporter by parathyroid hormone: immunohistochemistry.</title>
        <authorList>
            <person name="Lotscher M."/>
            <person name="Kaissling B."/>
            <person name="Biber J."/>
            <person name="Murer H."/>
            <person name="Kempson S.A."/>
            <person name="Levi M."/>
        </authorList>
    </citation>
    <scope>SUBCELLULAR LOCATION</scope>
    <scope>INDUCTION</scope>
</reference>
<reference key="4">
    <citation type="journal article" date="1997" name="J. Biochem.">
        <title>Acute regulation by dietary phosphate of the sodium-dependent phosphate transporter (NaP(i)-2) in rat kidney.</title>
        <authorList>
            <person name="Katai K."/>
            <person name="Segawa H."/>
            <person name="Haga H."/>
            <person name="Morita K."/>
            <person name="Arai H."/>
            <person name="Tatsumi S."/>
            <person name="Taketani Y."/>
            <person name="Miyamoto K."/>
            <person name="Hisano S."/>
            <person name="Fukui Y."/>
            <person name="Takeda E."/>
        </authorList>
    </citation>
    <scope>FUNCTION</scope>
    <scope>TRANSPORTER ACTIVITY</scope>
    <scope>TISSUE SPECIFICITY</scope>
    <scope>ACTIVITY REGULATION</scope>
    <scope>INDUCTION</scope>
    <scope>SUBCELLULAR LOCATION</scope>
</reference>
<reference key="5">
    <citation type="journal article" date="1999" name="Am. J. Physiol.">
        <title>Stoichiometry and Na+ binding cooperativity of rat and flounder renal type II Na+-Pi cotransporters.</title>
        <authorList>
            <person name="Forster I.C."/>
            <person name="Loo D.D."/>
            <person name="Eskandari S."/>
        </authorList>
    </citation>
    <scope>FUNCTION</scope>
    <scope>TRANSPORTER ACTIVITY</scope>
    <scope>BIOPHYSICOCHEMICAL PROPERTIES</scope>
    <scope>STOICHIOMETRY</scope>
</reference>
<reference key="6">
    <citation type="journal article" date="1999" name="Pflugers Arch.">
        <title>Studies on the topology of the renal type II NaPi-cotransporter.</title>
        <authorList>
            <person name="Lambert G."/>
            <person name="Traebert M."/>
            <person name="Hernando N."/>
            <person name="Biber J."/>
            <person name="Murer H."/>
        </authorList>
    </citation>
    <scope>FUNCTION</scope>
    <scope>TRANSPORTER ACTIVITY</scope>
    <scope>SUBCELLULAR LOCATION</scope>
    <scope>TOPOLOGY</scope>
</reference>
<reference key="7">
    <citation type="journal article" date="2000" name="J. Membr. Biol.">
        <title>Cysteine residues and the structure of the rat renal proximal tubular type II sodium phosphate cotransporter (rat NaPi IIa).</title>
        <authorList>
            <person name="Lambert G."/>
            <person name="Forster I.C."/>
            <person name="Biber J."/>
            <person name="Murer H."/>
        </authorList>
    </citation>
    <scope>FUNCTION</scope>
    <scope>TRANSPORTER ACTIVITY</scope>
    <scope>DISULFIDE BONDS</scope>
    <scope>REVISED TOPOLOGY</scope>
    <scope>MUTAGENESIS OF CYS-62; CYS-70; CYS-116; CYS-225; CYS-306; CYS-334; CYS-361; CYS-363; CYS-474; CYS-491; CYS-520 AND CYS-597</scope>
</reference>
<reference key="8">
    <citation type="journal article" date="2012" name="Nat. Commun.">
        <title>Quantitative maps of protein phosphorylation sites across 14 different rat organs and tissues.</title>
        <authorList>
            <person name="Lundby A."/>
            <person name="Secher A."/>
            <person name="Lage K."/>
            <person name="Nordsborg N.B."/>
            <person name="Dmytriyev A."/>
            <person name="Lundby C."/>
            <person name="Olsen J.V."/>
        </authorList>
    </citation>
    <scope>PHOSPHORYLATION [LARGE SCALE ANALYSIS] AT SER-14; SER-605; THR-621 AND SER-623</scope>
    <scope>IDENTIFICATION BY MASS SPECTROMETRY [LARGE SCALE ANALYSIS]</scope>
</reference>
<comment type="function">
    <text evidence="4 5 6 7 9">Involved in actively transporting phosphate into cells via Na(+) cotransport in the renal brush border membrane (PubMed:10198426, PubMed:10370077, PubMed:10926678, PubMed:8327470, PubMed:9058191). The cotransport has a Na(+):Pi stoichiometry of 3:1 and is electrogenic (PubMed:10198426).</text>
</comment>
<comment type="catalytic activity">
    <reaction evidence="4 5 6 7 9">
        <text>3 Na(+)(out) + phosphate(out) = 3 Na(+)(in) + phosphate(in)</text>
        <dbReference type="Rhea" id="RHEA:71255"/>
        <dbReference type="ChEBI" id="CHEBI:29101"/>
        <dbReference type="ChEBI" id="CHEBI:43474"/>
    </reaction>
    <physiologicalReaction direction="left-to-right" evidence="12">
        <dbReference type="Rhea" id="RHEA:71256"/>
    </physiologicalReaction>
</comment>
<comment type="activity regulation">
    <text evidence="9">Transport activity is significantly increased in response to dietary phosphate deprivation.</text>
</comment>
<comment type="biophysicochemical properties">
    <kinetics>
        <KM evidence="7">0.13 mM for phosphate</KM>
        <KM evidence="4">0.03 mM for phosphate</KM>
        <KM evidence="4">59 mM for sodium</KM>
    </kinetics>
    <phDependence>
        <text evidence="7">Optimum pH is 8.0.</text>
    </phDependence>
</comment>
<comment type="subunit">
    <text evidence="1 2">Interacts via its C-terminal region with NHERF4. Interacts with NHERF1. Interacts with TMEM174; regulates SLC34A1 internalization by PTH and FGF23 (By similarity).</text>
</comment>
<comment type="subcellular location">
    <subcellularLocation>
        <location evidence="1">Apical cell membrane</location>
        <topology evidence="3">Multi-pass membrane protein</topology>
    </subcellularLocation>
    <subcellularLocation>
        <location evidence="5 8 9">Cell membrane</location>
        <topology evidence="3">Multi-pass membrane protein</topology>
    </subcellularLocation>
    <text evidence="2 8 9">Localized at the brush border membranes of the proximal tubules. Internalized from the cell surface upon PTH stimulation (By similarity).</text>
</comment>
<comment type="tissue specificity">
    <text evidence="7 9">Kidney.</text>
</comment>
<comment type="induction">
    <text evidence="8 9">Up-regulated by a low-phosphate diet (PubMed:9058191). Down-regulated by PTH at brush border membrane of proximal tubules (PubMed:8691716).</text>
</comment>
<comment type="similarity">
    <text evidence="10">Belongs to the SLC34A transporter family.</text>
</comment>
<gene>
    <name evidence="13" type="primary">Slc34a1</name>
    <name evidence="13" type="synonym">Slc17a2</name>
</gene>
<keyword id="KW-1003">Cell membrane</keyword>
<keyword id="KW-1015">Disulfide bond</keyword>
<keyword id="KW-0325">Glycoprotein</keyword>
<keyword id="KW-0406">Ion transport</keyword>
<keyword id="KW-0472">Membrane</keyword>
<keyword id="KW-0597">Phosphoprotein</keyword>
<keyword id="KW-1185">Reference proteome</keyword>
<keyword id="KW-0915">Sodium</keyword>
<keyword id="KW-0739">Sodium transport</keyword>
<keyword id="KW-0769">Symport</keyword>
<keyword id="KW-0812">Transmembrane</keyword>
<keyword id="KW-1133">Transmembrane helix</keyword>
<keyword id="KW-0813">Transport</keyword>